<sequence>MNLNEYVKQVSLEDFDWEFRHQAYWNKRLRTTGGRFFPKDGHLDFNPKIYEAFGLETFRKIVRHELVHYHLYYQGKGYRHKDRDFKELLKQVGGLRYTPSISSPEGRLHYQCQQCHADFYRKRQIDLKRYRCGRCKGKLRLLKQER</sequence>
<evidence type="ECO:0000255" key="1">
    <source>
        <dbReference type="HAMAP-Rule" id="MF_00745"/>
    </source>
</evidence>
<reference key="1">
    <citation type="journal article" date="2007" name="J. Bacteriol.">
        <title>Genome-wide transcriptional changes in Streptococcus gordonii in response to competence signaling peptide.</title>
        <authorList>
            <person name="Vickerman M.M."/>
            <person name="Iobst S."/>
            <person name="Jesionowski A.M."/>
            <person name="Gill S.R."/>
        </authorList>
    </citation>
    <scope>NUCLEOTIDE SEQUENCE [LARGE SCALE GENOMIC DNA]</scope>
    <source>
        <strain>Challis / ATCC 35105 / BCRC 15272 / CH1 / DL1 / V288</strain>
    </source>
</reference>
<name>SPRTL_STRGC</name>
<accession>A8AWD2</accession>
<comment type="cofactor">
    <cofactor evidence="1">
        <name>Zn(2+)</name>
        <dbReference type="ChEBI" id="CHEBI:29105"/>
    </cofactor>
    <text evidence="1">Binds 1 zinc ion.</text>
</comment>
<comment type="subcellular location">
    <subcellularLocation>
        <location evidence="1">Cytoplasm</location>
    </subcellularLocation>
</comment>
<comment type="similarity">
    <text evidence="1">Belongs to the SprT family.</text>
</comment>
<protein>
    <recommendedName>
        <fullName evidence="1">Protein SprT-like</fullName>
    </recommendedName>
</protein>
<keyword id="KW-0963">Cytoplasm</keyword>
<keyword id="KW-0479">Metal-binding</keyword>
<keyword id="KW-1185">Reference proteome</keyword>
<keyword id="KW-0862">Zinc</keyword>
<dbReference type="EMBL" id="CP000725">
    <property type="protein sequence ID" value="ABV10310.1"/>
    <property type="molecule type" value="Genomic_DNA"/>
</dbReference>
<dbReference type="RefSeq" id="WP_012000252.1">
    <property type="nucleotide sequence ID" value="NC_009785.1"/>
</dbReference>
<dbReference type="SMR" id="A8AWD2"/>
<dbReference type="STRING" id="467705.SGO_0793"/>
<dbReference type="KEGG" id="sgo:SGO_0793"/>
<dbReference type="eggNOG" id="COG3091">
    <property type="taxonomic scope" value="Bacteria"/>
</dbReference>
<dbReference type="HOGENOM" id="CLU_123820_0_0_9"/>
<dbReference type="Proteomes" id="UP000001131">
    <property type="component" value="Chromosome"/>
</dbReference>
<dbReference type="GO" id="GO:0005737">
    <property type="term" value="C:cytoplasm"/>
    <property type="evidence" value="ECO:0007669"/>
    <property type="project" value="UniProtKB-SubCell"/>
</dbReference>
<dbReference type="GO" id="GO:0008270">
    <property type="term" value="F:zinc ion binding"/>
    <property type="evidence" value="ECO:0007669"/>
    <property type="project" value="UniProtKB-UniRule"/>
</dbReference>
<dbReference type="GO" id="GO:0006950">
    <property type="term" value="P:response to stress"/>
    <property type="evidence" value="ECO:0007669"/>
    <property type="project" value="UniProtKB-ARBA"/>
</dbReference>
<dbReference type="HAMAP" id="MF_00745">
    <property type="entry name" value="SprT_like"/>
    <property type="match status" value="1"/>
</dbReference>
<dbReference type="InterPro" id="IPR006640">
    <property type="entry name" value="SprT-like_domain"/>
</dbReference>
<dbReference type="InterPro" id="IPR023524">
    <property type="entry name" value="Uncharacterised_SprT-like"/>
</dbReference>
<dbReference type="NCBIfam" id="NF003339">
    <property type="entry name" value="PRK04351.1"/>
    <property type="match status" value="1"/>
</dbReference>
<dbReference type="Pfam" id="PF10263">
    <property type="entry name" value="SprT-like"/>
    <property type="match status" value="1"/>
</dbReference>
<dbReference type="SMART" id="SM00731">
    <property type="entry name" value="SprT"/>
    <property type="match status" value="1"/>
</dbReference>
<feature type="chain" id="PRO_1000083480" description="Protein SprT-like">
    <location>
        <begin position="1"/>
        <end position="146"/>
    </location>
</feature>
<feature type="domain" description="SprT-like" evidence="1">
    <location>
        <begin position="4"/>
        <end position="142"/>
    </location>
</feature>
<feature type="active site" evidence="1">
    <location>
        <position position="65"/>
    </location>
</feature>
<feature type="binding site" evidence="1">
    <location>
        <position position="64"/>
    </location>
    <ligand>
        <name>Zn(2+)</name>
        <dbReference type="ChEBI" id="CHEBI:29105"/>
    </ligand>
</feature>
<feature type="binding site" evidence="1">
    <location>
        <position position="68"/>
    </location>
    <ligand>
        <name>Zn(2+)</name>
        <dbReference type="ChEBI" id="CHEBI:29105"/>
    </ligand>
</feature>
<proteinExistence type="inferred from homology"/>
<organism>
    <name type="scientific">Streptococcus gordonii (strain Challis / ATCC 35105 / BCRC 15272 / CH1 / DL1 / V288)</name>
    <dbReference type="NCBI Taxonomy" id="467705"/>
    <lineage>
        <taxon>Bacteria</taxon>
        <taxon>Bacillati</taxon>
        <taxon>Bacillota</taxon>
        <taxon>Bacilli</taxon>
        <taxon>Lactobacillales</taxon>
        <taxon>Streptococcaceae</taxon>
        <taxon>Streptococcus</taxon>
    </lineage>
</organism>
<gene>
    <name type="ordered locus">SGO_0793</name>
</gene>